<organism>
    <name type="scientific">Centruroides limpidus</name>
    <name type="common">Mexican scorpion</name>
    <dbReference type="NCBI Taxonomy" id="6876"/>
    <lineage>
        <taxon>Eukaryota</taxon>
        <taxon>Metazoa</taxon>
        <taxon>Ecdysozoa</taxon>
        <taxon>Arthropoda</taxon>
        <taxon>Chelicerata</taxon>
        <taxon>Arachnida</taxon>
        <taxon>Scorpiones</taxon>
        <taxon>Buthida</taxon>
        <taxon>Buthoidea</taxon>
        <taxon>Buthidae</taxon>
        <taxon>Centruroides</taxon>
    </lineage>
</organism>
<sequence>TVSAKEGYLVKKSNGCKYECFKLGENEHCDTECKAPNQGGSYGYCDTFECWCEGLPESTPTWPLPNKSCGKK</sequence>
<protein>
    <recommendedName>
        <fullName>Toxin Cll8</fullName>
    </recommendedName>
</protein>
<name>SCX8_CENLI</name>
<evidence type="ECO:0000250" key="1"/>
<evidence type="ECO:0000255" key="2">
    <source>
        <dbReference type="PROSITE-ProRule" id="PRU01210"/>
    </source>
</evidence>
<evidence type="ECO:0000305" key="3"/>
<feature type="signal peptide" evidence="1">
    <location>
        <begin position="1" status="less than"/>
        <end position="4"/>
    </location>
</feature>
<feature type="chain" id="PRO_0000035276" description="Toxin Cll8">
    <location>
        <begin position="5"/>
        <end position="69"/>
    </location>
</feature>
<feature type="domain" description="LCN-type CS-alpha/beta" evidence="2">
    <location>
        <begin position="5"/>
        <end position="70"/>
    </location>
</feature>
<feature type="modified residue" description="Cysteine amide" evidence="1">
    <location>
        <position position="69"/>
    </location>
</feature>
<feature type="disulfide bond" evidence="2">
    <location>
        <begin position="16"/>
        <end position="69"/>
    </location>
</feature>
<feature type="disulfide bond" evidence="2">
    <location>
        <begin position="20"/>
        <end position="45"/>
    </location>
</feature>
<feature type="disulfide bond" evidence="2">
    <location>
        <begin position="29"/>
        <end position="50"/>
    </location>
</feature>
<feature type="disulfide bond" evidence="2">
    <location>
        <begin position="33"/>
        <end position="52"/>
    </location>
</feature>
<feature type="non-terminal residue">
    <location>
        <position position="1"/>
    </location>
</feature>
<reference key="1">
    <citation type="submission" date="2002-03" db="EMBL/GenBank/DDBJ databases">
        <title>Genes and peptides from the scorpion Centruroides limpidus limpidus, that recognize Na(+)-channels.</title>
        <authorList>
            <person name="Corona M."/>
            <person name="Possani L.D."/>
        </authorList>
    </citation>
    <scope>NUCLEOTIDE SEQUENCE [GENOMIC DNA]</scope>
</reference>
<keyword id="KW-0027">Amidation</keyword>
<keyword id="KW-1015">Disulfide bond</keyword>
<keyword id="KW-0872">Ion channel impairing toxin</keyword>
<keyword id="KW-0528">Neurotoxin</keyword>
<keyword id="KW-0964">Secreted</keyword>
<keyword id="KW-0732">Signal</keyword>
<keyword id="KW-0800">Toxin</keyword>
<keyword id="KW-0738">Voltage-gated sodium channel impairing toxin</keyword>
<proteinExistence type="evidence at transcript level"/>
<comment type="function">
    <text evidence="1">Beta toxins bind voltage-independently at site-4 of sodium channels (Nav) and shift the voltage of activation toward more negative potentials thereby affecting sodium channel activation and promoting spontaneous and repetitive firing.</text>
</comment>
<comment type="subcellular location">
    <subcellularLocation>
        <location evidence="1">Secreted</location>
    </subcellularLocation>
</comment>
<comment type="tissue specificity">
    <text>Expressed by the venom gland.</text>
</comment>
<comment type="domain">
    <text evidence="3">Has the structural arrangement of an alpha-helix connected to antiparallel beta-sheets by disulfide bonds (CS-alpha/beta).</text>
</comment>
<comment type="similarity">
    <text evidence="3">Belongs to the long (4 C-C) scorpion toxin superfamily. Sodium channel inhibitor family. Beta subfamily.</text>
</comment>
<accession>Q7Z1K4</accession>
<dbReference type="EMBL" id="AF491134">
    <property type="protein sequence ID" value="AAP49509.1"/>
    <property type="molecule type" value="Genomic_DNA"/>
</dbReference>
<dbReference type="SMR" id="Q7Z1K4"/>
<dbReference type="GO" id="GO:0005576">
    <property type="term" value="C:extracellular region"/>
    <property type="evidence" value="ECO:0007669"/>
    <property type="project" value="UniProtKB-SubCell"/>
</dbReference>
<dbReference type="GO" id="GO:0019871">
    <property type="term" value="F:sodium channel inhibitor activity"/>
    <property type="evidence" value="ECO:0007669"/>
    <property type="project" value="InterPro"/>
</dbReference>
<dbReference type="GO" id="GO:0090729">
    <property type="term" value="F:toxin activity"/>
    <property type="evidence" value="ECO:0007669"/>
    <property type="project" value="UniProtKB-KW"/>
</dbReference>
<dbReference type="GO" id="GO:0006952">
    <property type="term" value="P:defense response"/>
    <property type="evidence" value="ECO:0007669"/>
    <property type="project" value="InterPro"/>
</dbReference>
<dbReference type="CDD" id="cd23106">
    <property type="entry name" value="neurotoxins_LC_scorpion"/>
    <property type="match status" value="1"/>
</dbReference>
<dbReference type="FunFam" id="3.30.30.10:FF:000002">
    <property type="entry name" value="Alpha-like toxin BmK-M1"/>
    <property type="match status" value="1"/>
</dbReference>
<dbReference type="Gene3D" id="3.30.30.10">
    <property type="entry name" value="Knottin, scorpion toxin-like"/>
    <property type="match status" value="1"/>
</dbReference>
<dbReference type="InterPro" id="IPR044062">
    <property type="entry name" value="LCN-type_CS_alpha_beta_dom"/>
</dbReference>
<dbReference type="InterPro" id="IPR003614">
    <property type="entry name" value="Scorpion_toxin-like"/>
</dbReference>
<dbReference type="InterPro" id="IPR036574">
    <property type="entry name" value="Scorpion_toxin-like_sf"/>
</dbReference>
<dbReference type="InterPro" id="IPR018218">
    <property type="entry name" value="Scorpion_toxinL"/>
</dbReference>
<dbReference type="InterPro" id="IPR002061">
    <property type="entry name" value="Scorpion_toxinL/defensin"/>
</dbReference>
<dbReference type="Pfam" id="PF00537">
    <property type="entry name" value="Toxin_3"/>
    <property type="match status" value="1"/>
</dbReference>
<dbReference type="PRINTS" id="PR00285">
    <property type="entry name" value="SCORPNTOXIN"/>
</dbReference>
<dbReference type="SMART" id="SM00505">
    <property type="entry name" value="Knot1"/>
    <property type="match status" value="1"/>
</dbReference>
<dbReference type="SUPFAM" id="SSF57095">
    <property type="entry name" value="Scorpion toxin-like"/>
    <property type="match status" value="1"/>
</dbReference>
<dbReference type="PROSITE" id="PS51863">
    <property type="entry name" value="LCN_CSAB"/>
    <property type="match status" value="1"/>
</dbReference>